<comment type="function">
    <text evidence="2">Component of the ubiquinol-cytochrome c reductase complex (complex III or cytochrome b-c1 complex) that is part of the mitochondrial respiratory chain. The b-c1 complex mediates electron transfer from ubiquinol to cytochrome c. Contributes to the generation of a proton gradient across the mitochondrial membrane that is then used for ATP synthesis.</text>
</comment>
<comment type="cofactor">
    <cofactor evidence="2">
        <name>heme b</name>
        <dbReference type="ChEBI" id="CHEBI:60344"/>
    </cofactor>
    <text evidence="2">Binds 2 heme b groups non-covalently.</text>
</comment>
<comment type="subunit">
    <text evidence="2">The cytochrome bc1 complex contains 3 respiratory subunits (MT-CYB, CYC1 and UQCRFS1), 2 core proteins (UQCRC1 and UQCRC2) and probably 6 low-molecular weight proteins.</text>
</comment>
<comment type="subcellular location">
    <subcellularLocation>
        <location evidence="2">Mitochondrion inner membrane</location>
        <topology evidence="2">Multi-pass membrane protein</topology>
    </subcellularLocation>
</comment>
<comment type="miscellaneous">
    <text evidence="1">Heme 1 (or BL or b562) is low-potential and absorbs at about 562 nm, and heme 2 (or BH or b566) is high-potential and absorbs at about 566 nm.</text>
</comment>
<comment type="similarity">
    <text evidence="3 4">Belongs to the cytochrome b family.</text>
</comment>
<comment type="caution">
    <text evidence="2">The full-length protein contains only eight transmembrane helices, not nine as predicted by bioinformatics tools.</text>
</comment>
<feature type="chain" id="PRO_0000061478" description="Cytochrome b">
    <location>
        <begin position="1"/>
        <end position="371"/>
    </location>
</feature>
<feature type="transmembrane region" description="Helical" evidence="2">
    <location>
        <begin position="25"/>
        <end position="45"/>
    </location>
</feature>
<feature type="transmembrane region" description="Helical" evidence="2">
    <location>
        <begin position="69"/>
        <end position="90"/>
    </location>
</feature>
<feature type="transmembrane region" description="Helical" evidence="2">
    <location>
        <begin position="105"/>
        <end position="125"/>
    </location>
</feature>
<feature type="transmembrane region" description="Helical" evidence="2">
    <location>
        <begin position="170"/>
        <end position="190"/>
    </location>
</feature>
<feature type="transmembrane region" description="Helical" evidence="2">
    <location>
        <begin position="218"/>
        <end position="238"/>
    </location>
</feature>
<feature type="transmembrane region" description="Helical" evidence="2">
    <location>
        <begin position="280"/>
        <end position="300"/>
    </location>
</feature>
<feature type="transmembrane region" description="Helical" evidence="2">
    <location>
        <begin position="312"/>
        <end position="332"/>
    </location>
</feature>
<feature type="transmembrane region" description="Helical" evidence="2">
    <location>
        <begin position="339"/>
        <end position="358"/>
    </location>
</feature>
<feature type="binding site" description="axial binding residue" evidence="2">
    <location>
        <position position="75"/>
    </location>
    <ligand>
        <name>heme b</name>
        <dbReference type="ChEBI" id="CHEBI:60344"/>
        <label>b562</label>
    </ligand>
    <ligandPart>
        <name>Fe</name>
        <dbReference type="ChEBI" id="CHEBI:18248"/>
    </ligandPart>
</feature>
<feature type="binding site" description="axial binding residue" evidence="2">
    <location>
        <position position="89"/>
    </location>
    <ligand>
        <name>heme b</name>
        <dbReference type="ChEBI" id="CHEBI:60344"/>
        <label>b566</label>
    </ligand>
    <ligandPart>
        <name>Fe</name>
        <dbReference type="ChEBI" id="CHEBI:18248"/>
    </ligandPart>
</feature>
<feature type="binding site" description="axial binding residue" evidence="2">
    <location>
        <position position="174"/>
    </location>
    <ligand>
        <name>heme b</name>
        <dbReference type="ChEBI" id="CHEBI:60344"/>
        <label>b562</label>
    </ligand>
    <ligandPart>
        <name>Fe</name>
        <dbReference type="ChEBI" id="CHEBI:18248"/>
    </ligandPart>
</feature>
<feature type="binding site" description="axial binding residue" evidence="2">
    <location>
        <position position="188"/>
    </location>
    <ligand>
        <name>heme b</name>
        <dbReference type="ChEBI" id="CHEBI:60344"/>
        <label>b566</label>
    </ligand>
    <ligandPart>
        <name>Fe</name>
        <dbReference type="ChEBI" id="CHEBI:18248"/>
    </ligandPart>
</feature>
<feature type="binding site" evidence="2">
    <location>
        <position position="193"/>
    </location>
    <ligand>
        <name>a ubiquinone</name>
        <dbReference type="ChEBI" id="CHEBI:16389"/>
    </ligand>
</feature>
<proteinExistence type="inferred from homology"/>
<protein>
    <recommendedName>
        <fullName>Cytochrome b</fullName>
    </recommendedName>
    <alternativeName>
        <fullName>Complex III subunit 3</fullName>
    </alternativeName>
    <alternativeName>
        <fullName>Complex III subunit III</fullName>
    </alternativeName>
    <alternativeName>
        <fullName>Cytochrome b-c1 complex subunit 3</fullName>
    </alternativeName>
    <alternativeName>
        <fullName>Ubiquinol-cytochrome-c reductase complex cytochrome b subunit</fullName>
    </alternativeName>
</protein>
<organism>
    <name type="scientific">Malayopython reticulatus</name>
    <name type="common">Reticulate python</name>
    <name type="synonym">Python reticulatus</name>
    <dbReference type="NCBI Taxonomy" id="1496311"/>
    <lineage>
        <taxon>Eukaryota</taxon>
        <taxon>Metazoa</taxon>
        <taxon>Chordata</taxon>
        <taxon>Craniata</taxon>
        <taxon>Vertebrata</taxon>
        <taxon>Euteleostomi</taxon>
        <taxon>Lepidosauria</taxon>
        <taxon>Squamata</taxon>
        <taxon>Bifurcata</taxon>
        <taxon>Unidentata</taxon>
        <taxon>Episquamata</taxon>
        <taxon>Toxicofera</taxon>
        <taxon>Serpentes</taxon>
        <taxon>Henophidia</taxon>
        <taxon>Pythonidae</taxon>
        <taxon>Malayopython</taxon>
    </lineage>
</organism>
<reference key="1">
    <citation type="thesis" date="1997" institute="Queen's University / Kingston" country="Canada">
        <title>Hic Sunt Serpentes -- molecular phylogenetics and the Boidae (Serpentes: Booidea).</title>
        <authorList>
            <person name="Campbell B.N."/>
        </authorList>
    </citation>
    <scope>NUCLEOTIDE SEQUENCE [GENOMIC DNA]</scope>
</reference>
<accession>O48277</accession>
<dbReference type="EMBL" id="U69859">
    <property type="protein sequence ID" value="AAC01893.1"/>
    <property type="molecule type" value="Genomic_DNA"/>
</dbReference>
<dbReference type="EMBL" id="U69860">
    <property type="protein sequence ID" value="AAC01894.1"/>
    <property type="molecule type" value="Genomic_DNA"/>
</dbReference>
<dbReference type="EMBL" id="U69861">
    <property type="protein sequence ID" value="AAC01895.1"/>
    <property type="molecule type" value="Genomic_DNA"/>
</dbReference>
<dbReference type="EMBL" id="U69862">
    <property type="protein sequence ID" value="AAC01896.1"/>
    <property type="molecule type" value="Genomic_DNA"/>
</dbReference>
<dbReference type="SMR" id="O48277"/>
<dbReference type="GO" id="GO:0005743">
    <property type="term" value="C:mitochondrial inner membrane"/>
    <property type="evidence" value="ECO:0007669"/>
    <property type="project" value="UniProtKB-SubCell"/>
</dbReference>
<dbReference type="GO" id="GO:0045275">
    <property type="term" value="C:respiratory chain complex III"/>
    <property type="evidence" value="ECO:0007669"/>
    <property type="project" value="InterPro"/>
</dbReference>
<dbReference type="GO" id="GO:0046872">
    <property type="term" value="F:metal ion binding"/>
    <property type="evidence" value="ECO:0007669"/>
    <property type="project" value="UniProtKB-KW"/>
</dbReference>
<dbReference type="GO" id="GO:0008121">
    <property type="term" value="F:ubiquinol-cytochrome-c reductase activity"/>
    <property type="evidence" value="ECO:0007669"/>
    <property type="project" value="InterPro"/>
</dbReference>
<dbReference type="GO" id="GO:0006122">
    <property type="term" value="P:mitochondrial electron transport, ubiquinol to cytochrome c"/>
    <property type="evidence" value="ECO:0007669"/>
    <property type="project" value="TreeGrafter"/>
</dbReference>
<dbReference type="CDD" id="cd00290">
    <property type="entry name" value="cytochrome_b_C"/>
    <property type="match status" value="1"/>
</dbReference>
<dbReference type="CDD" id="cd00284">
    <property type="entry name" value="Cytochrome_b_N"/>
    <property type="match status" value="1"/>
</dbReference>
<dbReference type="Gene3D" id="1.20.810.10">
    <property type="entry name" value="Cytochrome Bc1 Complex, Chain C"/>
    <property type="match status" value="1"/>
</dbReference>
<dbReference type="InterPro" id="IPR005798">
    <property type="entry name" value="Cyt_b/b6_C"/>
</dbReference>
<dbReference type="InterPro" id="IPR036150">
    <property type="entry name" value="Cyt_b/b6_C_sf"/>
</dbReference>
<dbReference type="InterPro" id="IPR005797">
    <property type="entry name" value="Cyt_b/b6_N"/>
</dbReference>
<dbReference type="InterPro" id="IPR027387">
    <property type="entry name" value="Cytb/b6-like_sf"/>
</dbReference>
<dbReference type="InterPro" id="IPR030689">
    <property type="entry name" value="Cytochrome_b"/>
</dbReference>
<dbReference type="InterPro" id="IPR048260">
    <property type="entry name" value="Cytochrome_b_C_euk/bac"/>
</dbReference>
<dbReference type="InterPro" id="IPR048259">
    <property type="entry name" value="Cytochrome_b_N_euk/bac"/>
</dbReference>
<dbReference type="InterPro" id="IPR016174">
    <property type="entry name" value="Di-haem_cyt_TM"/>
</dbReference>
<dbReference type="PANTHER" id="PTHR19271">
    <property type="entry name" value="CYTOCHROME B"/>
    <property type="match status" value="1"/>
</dbReference>
<dbReference type="PANTHER" id="PTHR19271:SF16">
    <property type="entry name" value="CYTOCHROME B"/>
    <property type="match status" value="1"/>
</dbReference>
<dbReference type="Pfam" id="PF00032">
    <property type="entry name" value="Cytochrom_B_C"/>
    <property type="match status" value="1"/>
</dbReference>
<dbReference type="Pfam" id="PF00033">
    <property type="entry name" value="Cytochrome_B"/>
    <property type="match status" value="1"/>
</dbReference>
<dbReference type="PIRSF" id="PIRSF038885">
    <property type="entry name" value="COB"/>
    <property type="match status" value="1"/>
</dbReference>
<dbReference type="SUPFAM" id="SSF81648">
    <property type="entry name" value="a domain/subunit of cytochrome bc1 complex (Ubiquinol-cytochrome c reductase)"/>
    <property type="match status" value="1"/>
</dbReference>
<dbReference type="SUPFAM" id="SSF81342">
    <property type="entry name" value="Transmembrane di-heme cytochromes"/>
    <property type="match status" value="1"/>
</dbReference>
<dbReference type="PROSITE" id="PS51003">
    <property type="entry name" value="CYTB_CTER"/>
    <property type="match status" value="1"/>
</dbReference>
<dbReference type="PROSITE" id="PS51002">
    <property type="entry name" value="CYTB_NTER"/>
    <property type="match status" value="1"/>
</dbReference>
<sequence length="371" mass="42306">MPHHYILTLFGLLPVATNISTWWNFGSMLLTCLALQVLTGFFLAVHYTANINLAFSSIIHITRDVPYGWMMQNLHAIGASMFFICIYIHIARGLYYGSYLNKETWMSGITLLITLMATAFFGYVLPWGQMSFWAATVITNLLTAVPYLGTSLTTWLWGGFAINDPTLTRFFALHFILPFAIISLSSLHVILLHEEGSSNPLGTNPDIDKIPFHPYHSYKDFLLLTLMVLSLFIIVSFFPDIFNDPDNFSKANPLVTPQHIKPEWYFLFAYGILRSIPNQLGGALALVMSIMILFTIPFTHTANLRPMTFRPLYQLMFWTLVSTFITITWAATKPVEPPFITISQVTSTLYFTFFISIPFLGWMENKMMHLN</sequence>
<geneLocation type="mitochondrion"/>
<keyword id="KW-0249">Electron transport</keyword>
<keyword id="KW-0349">Heme</keyword>
<keyword id="KW-0408">Iron</keyword>
<keyword id="KW-0472">Membrane</keyword>
<keyword id="KW-0479">Metal-binding</keyword>
<keyword id="KW-0496">Mitochondrion</keyword>
<keyword id="KW-0999">Mitochondrion inner membrane</keyword>
<keyword id="KW-0679">Respiratory chain</keyword>
<keyword id="KW-0812">Transmembrane</keyword>
<keyword id="KW-1133">Transmembrane helix</keyword>
<keyword id="KW-0813">Transport</keyword>
<keyword id="KW-0830">Ubiquinone</keyword>
<evidence type="ECO:0000250" key="1"/>
<evidence type="ECO:0000250" key="2">
    <source>
        <dbReference type="UniProtKB" id="P00157"/>
    </source>
</evidence>
<evidence type="ECO:0000255" key="3">
    <source>
        <dbReference type="PROSITE-ProRule" id="PRU00967"/>
    </source>
</evidence>
<evidence type="ECO:0000255" key="4">
    <source>
        <dbReference type="PROSITE-ProRule" id="PRU00968"/>
    </source>
</evidence>
<name>CYB_MALRE</name>
<gene>
    <name type="primary">MT-CYB</name>
    <name type="synonym">COB</name>
    <name type="synonym">CYTB</name>
    <name type="synonym">MTCYB</name>
</gene>